<gene>
    <name type="primary">Slc25a18</name>
</gene>
<sequence length="320" mass="34170">MIACRMSSQDLSITAKLINGGIAGLVGVTCVFPIDLAKTRLQNQQGKDVYKGMTDCLVKTARAEGFLGMYRGAAVNLTLVTPEKAIKLAANDFLRQLLMQDGTQRNLKMEMLAGCGAGICQVVITCPMEMLKIQLQDAGRLAVCQQASASATPTSRPYSTGSTSTHRRPSATLIAWELLRTQGLSGLYRGLGATLLRDIPFSIIYFPLFANLNQLGVSELTGKASFTHSFVAGCAAGSVSAVAVTPLDVLKTRIQTLKKGLGEDTYRGVTDCARKLWTQEGAAAFMKGAGCRALVIAPLFGIAQGVYFIGIGERILKCFE</sequence>
<protein>
    <recommendedName>
        <fullName>Mitochondrial glutamate carrier 2</fullName>
        <shortName>GC-2</shortName>
    </recommendedName>
    <alternativeName>
        <fullName>Glutamate/H(+) symporter 2</fullName>
    </alternativeName>
    <alternativeName>
        <fullName>Solute carrier family 25 member 18</fullName>
    </alternativeName>
</protein>
<feature type="chain" id="PRO_0000090623" description="Mitochondrial glutamate carrier 2">
    <location>
        <begin position="1"/>
        <end position="320"/>
    </location>
</feature>
<feature type="transmembrane region" description="Helical; Name=1" evidence="2">
    <location>
        <begin position="17"/>
        <end position="37"/>
    </location>
</feature>
<feature type="transmembrane region" description="Helical; Name=2" evidence="2">
    <location>
        <begin position="66"/>
        <end position="86"/>
    </location>
</feature>
<feature type="transmembrane region" description="Helical; Name=3" evidence="2">
    <location>
        <begin position="111"/>
        <end position="131"/>
    </location>
</feature>
<feature type="transmembrane region" description="Helical; Name=4" evidence="2">
    <location>
        <begin position="190"/>
        <end position="210"/>
    </location>
</feature>
<feature type="transmembrane region" description="Helical; Name=5" evidence="2">
    <location>
        <begin position="230"/>
        <end position="250"/>
    </location>
</feature>
<feature type="transmembrane region" description="Helical; Name=6" evidence="2">
    <location>
        <begin position="293"/>
        <end position="313"/>
    </location>
</feature>
<feature type="repeat" description="Solcar 1" evidence="3">
    <location>
        <begin position="11"/>
        <end position="97"/>
    </location>
</feature>
<feature type="repeat" description="Solcar 2" evidence="3">
    <location>
        <begin position="105"/>
        <end position="215"/>
    </location>
</feature>
<feature type="repeat" description="Solcar 3" evidence="3">
    <location>
        <begin position="224"/>
        <end position="313"/>
    </location>
</feature>
<feature type="modified residue" description="Phosphoserine" evidence="1">
    <location>
        <position position="150"/>
    </location>
</feature>
<keyword id="KW-0472">Membrane</keyword>
<keyword id="KW-0496">Mitochondrion</keyword>
<keyword id="KW-0999">Mitochondrion inner membrane</keyword>
<keyword id="KW-0597">Phosphoprotein</keyword>
<keyword id="KW-1185">Reference proteome</keyword>
<keyword id="KW-0677">Repeat</keyword>
<keyword id="KW-0769">Symport</keyword>
<keyword id="KW-0812">Transmembrane</keyword>
<keyword id="KW-1133">Transmembrane helix</keyword>
<keyword id="KW-0813">Transport</keyword>
<comment type="function">
    <text evidence="1">Responsible for the transport of glutamate from the cytosol into the mitochondrial matrix with the concomitant import of a proton (symport system).</text>
</comment>
<comment type="catalytic activity">
    <reaction evidence="1">
        <text>L-glutamate(in) + H(+)(in) = L-glutamate(out) + H(+)(out)</text>
        <dbReference type="Rhea" id="RHEA:70955"/>
        <dbReference type="ChEBI" id="CHEBI:15378"/>
        <dbReference type="ChEBI" id="CHEBI:29985"/>
    </reaction>
</comment>
<comment type="subcellular location">
    <subcellularLocation>
        <location evidence="4">Mitochondrion inner membrane</location>
        <topology evidence="2">Multi-pass membrane protein</topology>
    </subcellularLocation>
</comment>
<comment type="similarity">
    <text evidence="5">Belongs to the mitochondrial carrier (TC 2.A.29) family.</text>
</comment>
<comment type="sequence caution" evidence="5">
    <conflict type="erroneous initiation">
        <sequence resource="EMBL-CDS" id="AAH94517"/>
    </conflict>
</comment>
<evidence type="ECO:0000250" key="1">
    <source>
        <dbReference type="UniProtKB" id="Q9H1K4"/>
    </source>
</evidence>
<evidence type="ECO:0000255" key="2"/>
<evidence type="ECO:0000255" key="3">
    <source>
        <dbReference type="PROSITE-ProRule" id="PRU00282"/>
    </source>
</evidence>
<evidence type="ECO:0000269" key="4">
    <source>
    </source>
</evidence>
<evidence type="ECO:0000305" key="5"/>
<organism>
    <name type="scientific">Rattus norvegicus</name>
    <name type="common">Rat</name>
    <dbReference type="NCBI Taxonomy" id="10116"/>
    <lineage>
        <taxon>Eukaryota</taxon>
        <taxon>Metazoa</taxon>
        <taxon>Chordata</taxon>
        <taxon>Craniata</taxon>
        <taxon>Vertebrata</taxon>
        <taxon>Euteleostomi</taxon>
        <taxon>Mammalia</taxon>
        <taxon>Eutheria</taxon>
        <taxon>Euarchontoglires</taxon>
        <taxon>Glires</taxon>
        <taxon>Rodentia</taxon>
        <taxon>Myomorpha</taxon>
        <taxon>Muroidea</taxon>
        <taxon>Muridae</taxon>
        <taxon>Murinae</taxon>
        <taxon>Rattus</taxon>
    </lineage>
</organism>
<name>GHC2_RAT</name>
<reference key="1">
    <citation type="journal article" date="2004" name="Genome Res.">
        <title>The status, quality, and expansion of the NIH full-length cDNA project: the Mammalian Gene Collection (MGC).</title>
        <authorList>
            <consortium name="The MGC Project Team"/>
        </authorList>
    </citation>
    <scope>NUCLEOTIDE SEQUENCE [LARGE SCALE MRNA]</scope>
    <source>
        <tissue>Brain</tissue>
    </source>
</reference>
<reference key="2">
    <citation type="journal article" date="2009" name="J. Biol. Chem.">
        <title>Mitochondrial glutamate carrier GC1 as a newly identified player in the control of glucose-stimulated insulin secretion.</title>
        <authorList>
            <person name="Casimir M."/>
            <person name="Lasorsa F.M."/>
            <person name="Rubi B."/>
            <person name="Caille D."/>
            <person name="Palmieri F."/>
            <person name="Meda P."/>
            <person name="Maechler P."/>
        </authorList>
    </citation>
    <scope>SUBCELLULAR LOCATION</scope>
</reference>
<proteinExistence type="evidence at transcript level"/>
<accession>Q505J6</accession>
<dbReference type="EMBL" id="BC094517">
    <property type="protein sequence ID" value="AAH94517.1"/>
    <property type="status" value="ALT_INIT"/>
    <property type="molecule type" value="mRNA"/>
</dbReference>
<dbReference type="RefSeq" id="NP_001037745.2">
    <property type="nucleotide sequence ID" value="NM_001044280.2"/>
</dbReference>
<dbReference type="RefSeq" id="XP_063142754.1">
    <property type="nucleotide sequence ID" value="XM_063286684.1"/>
</dbReference>
<dbReference type="SMR" id="Q505J6"/>
<dbReference type="BioGRID" id="596820">
    <property type="interactions" value="1"/>
</dbReference>
<dbReference type="FunCoup" id="Q505J6">
    <property type="interactions" value="175"/>
</dbReference>
<dbReference type="IntAct" id="Q505J6">
    <property type="interactions" value="1"/>
</dbReference>
<dbReference type="MINT" id="Q505J6"/>
<dbReference type="STRING" id="10116.ENSRNOP00000015561"/>
<dbReference type="iPTMnet" id="Q505J6"/>
<dbReference type="PhosphoSitePlus" id="Q505J6"/>
<dbReference type="jPOST" id="Q505J6"/>
<dbReference type="PaxDb" id="10116-ENSRNOP00000015561"/>
<dbReference type="Ensembl" id="ENSRNOT00000015560.8">
    <property type="protein sequence ID" value="ENSRNOP00000015561.4"/>
    <property type="gene ID" value="ENSRNOG00000042731.4"/>
</dbReference>
<dbReference type="GeneID" id="681896"/>
<dbReference type="KEGG" id="rno:681896"/>
<dbReference type="UCSC" id="RGD:1590470">
    <property type="organism name" value="rat"/>
</dbReference>
<dbReference type="AGR" id="RGD:1590470"/>
<dbReference type="CTD" id="83733"/>
<dbReference type="RGD" id="1590470">
    <property type="gene designation" value="Slc25a18"/>
</dbReference>
<dbReference type="eggNOG" id="KOG0750">
    <property type="taxonomic scope" value="Eukaryota"/>
</dbReference>
<dbReference type="GeneTree" id="ENSGT00940000162050"/>
<dbReference type="HOGENOM" id="CLU_015166_3_4_1"/>
<dbReference type="InParanoid" id="Q505J6"/>
<dbReference type="OrthoDB" id="28333at9989"/>
<dbReference type="PhylomeDB" id="Q505J6"/>
<dbReference type="TreeFam" id="TF313209"/>
<dbReference type="Reactome" id="R-RNO-428643">
    <property type="pathway name" value="Organic anion transporters"/>
</dbReference>
<dbReference type="Reactome" id="R-RNO-9856872">
    <property type="pathway name" value="Malate-aspartate shuttle"/>
</dbReference>
<dbReference type="PRO" id="PR:Q505J6"/>
<dbReference type="Proteomes" id="UP000002494">
    <property type="component" value="Chromosome 4"/>
</dbReference>
<dbReference type="Bgee" id="ENSRNOG00000042731">
    <property type="expression patterns" value="Expressed in cerebellum and 6 other cell types or tissues"/>
</dbReference>
<dbReference type="GO" id="GO:0005743">
    <property type="term" value="C:mitochondrial inner membrane"/>
    <property type="evidence" value="ECO:0000314"/>
    <property type="project" value="UniProtKB"/>
</dbReference>
<dbReference type="GO" id="GO:0005280">
    <property type="term" value="F:amino acid:proton symporter activity"/>
    <property type="evidence" value="ECO:0000250"/>
    <property type="project" value="UniProtKB"/>
</dbReference>
<dbReference type="GO" id="GO:0015183">
    <property type="term" value="F:L-aspartate transmembrane transporter activity"/>
    <property type="evidence" value="ECO:0000318"/>
    <property type="project" value="GO_Central"/>
</dbReference>
<dbReference type="GO" id="GO:0005313">
    <property type="term" value="F:L-glutamate transmembrane transporter activity"/>
    <property type="evidence" value="ECO:0000318"/>
    <property type="project" value="GO_Central"/>
</dbReference>
<dbReference type="GO" id="GO:0015810">
    <property type="term" value="P:aspartate transmembrane transport"/>
    <property type="evidence" value="ECO:0000318"/>
    <property type="project" value="GO_Central"/>
</dbReference>
<dbReference type="GO" id="GO:0015813">
    <property type="term" value="P:L-glutamate transmembrane transport"/>
    <property type="evidence" value="ECO:0000250"/>
    <property type="project" value="UniProtKB"/>
</dbReference>
<dbReference type="GO" id="GO:0043490">
    <property type="term" value="P:malate-aspartate shuttle"/>
    <property type="evidence" value="ECO:0000318"/>
    <property type="project" value="GO_Central"/>
</dbReference>
<dbReference type="FunFam" id="1.50.40.10:FF:000026">
    <property type="entry name" value="Putative mitochondrial glutamate carrier 2"/>
    <property type="match status" value="1"/>
</dbReference>
<dbReference type="Gene3D" id="1.50.40.10">
    <property type="entry name" value="Mitochondrial carrier domain"/>
    <property type="match status" value="1"/>
</dbReference>
<dbReference type="InterPro" id="IPR002067">
    <property type="entry name" value="Mit_carrier"/>
</dbReference>
<dbReference type="InterPro" id="IPR051028">
    <property type="entry name" value="Mito_Solute_Carrier"/>
</dbReference>
<dbReference type="InterPro" id="IPR018108">
    <property type="entry name" value="Mitochondrial_sb/sol_carrier"/>
</dbReference>
<dbReference type="InterPro" id="IPR023395">
    <property type="entry name" value="Mt_carrier_dom_sf"/>
</dbReference>
<dbReference type="PANTHER" id="PTHR45678">
    <property type="entry name" value="MITOCHONDRIAL 2-OXODICARBOXYLATE CARRIER 1-RELATED"/>
    <property type="match status" value="1"/>
</dbReference>
<dbReference type="PANTHER" id="PTHR45678:SF11">
    <property type="entry name" value="MITOCHONDRIAL GLUTAMATE CARRIER 2"/>
    <property type="match status" value="1"/>
</dbReference>
<dbReference type="Pfam" id="PF00153">
    <property type="entry name" value="Mito_carr"/>
    <property type="match status" value="3"/>
</dbReference>
<dbReference type="PRINTS" id="PR00926">
    <property type="entry name" value="MITOCARRIER"/>
</dbReference>
<dbReference type="SUPFAM" id="SSF103506">
    <property type="entry name" value="Mitochondrial carrier"/>
    <property type="match status" value="1"/>
</dbReference>
<dbReference type="PROSITE" id="PS50920">
    <property type="entry name" value="SOLCAR"/>
    <property type="match status" value="3"/>
</dbReference>